<dbReference type="EMBL" id="AABR07059674">
    <property type="status" value="NOT_ANNOTATED_CDS"/>
    <property type="molecule type" value="Genomic_DNA"/>
</dbReference>
<dbReference type="EMBL" id="AABR07059675">
    <property type="status" value="NOT_ANNOTATED_CDS"/>
    <property type="molecule type" value="Genomic_DNA"/>
</dbReference>
<dbReference type="EMBL" id="AABR07072979">
    <property type="status" value="NOT_ANNOTATED_CDS"/>
    <property type="molecule type" value="Genomic_DNA"/>
</dbReference>
<dbReference type="RefSeq" id="NP_001406553.1">
    <property type="nucleotide sequence ID" value="NM_001419624.1"/>
</dbReference>
<dbReference type="RefSeq" id="XP_001054092.3">
    <property type="nucleotide sequence ID" value="XM_001054092.6"/>
</dbReference>
<dbReference type="RefSeq" id="XP_008760961.1">
    <property type="nucleotide sequence ID" value="XM_008762739.1"/>
</dbReference>
<dbReference type="SMR" id="F1LZW6"/>
<dbReference type="STRING" id="10116.ENSRNOP00000013816"/>
<dbReference type="GlyGen" id="F1LZW6">
    <property type="glycosylation" value="1 site, 1 O-linked glycan (1 site)"/>
</dbReference>
<dbReference type="PhosphoSitePlus" id="F1LZW6"/>
<dbReference type="jPOST" id="F1LZW6"/>
<dbReference type="PaxDb" id="10116-ENSRNOP00000013816"/>
<dbReference type="GeneID" id="362322"/>
<dbReference type="AGR" id="RGD:1565889"/>
<dbReference type="RGD" id="1565889">
    <property type="gene designation" value="Slc25a13"/>
</dbReference>
<dbReference type="VEuPathDB" id="HostDB:ENSRNOG00000009957"/>
<dbReference type="eggNOG" id="KOG0751">
    <property type="taxonomic scope" value="Eukaryota"/>
</dbReference>
<dbReference type="HOGENOM" id="CLU_014931_0_0_1"/>
<dbReference type="InParanoid" id="F1LZW6"/>
<dbReference type="OrthoDB" id="2161at2759"/>
<dbReference type="TreeFam" id="TF313209"/>
<dbReference type="PRO" id="PR:F1LZW6"/>
<dbReference type="Proteomes" id="UP000002494">
    <property type="component" value="Chromosome 4"/>
</dbReference>
<dbReference type="Bgee" id="ENSRNOG00000009957">
    <property type="expression patterns" value="Expressed in liver and 18 other cell types or tissues"/>
</dbReference>
<dbReference type="GO" id="GO:0005743">
    <property type="term" value="C:mitochondrial inner membrane"/>
    <property type="evidence" value="ECO:0000250"/>
    <property type="project" value="UniProtKB"/>
</dbReference>
<dbReference type="GO" id="GO:0005739">
    <property type="term" value="C:mitochondrion"/>
    <property type="evidence" value="ECO:0000266"/>
    <property type="project" value="RGD"/>
</dbReference>
<dbReference type="GO" id="GO:0000514">
    <property type="term" value="F:3-sulfino-L-alanine: proton, glutamate antiporter activity"/>
    <property type="evidence" value="ECO:0000250"/>
    <property type="project" value="UniProtKB"/>
</dbReference>
<dbReference type="GO" id="GO:0015172">
    <property type="term" value="F:acidic amino acid transmembrane transporter activity"/>
    <property type="evidence" value="ECO:0000266"/>
    <property type="project" value="RGD"/>
</dbReference>
<dbReference type="GO" id="GO:0000515">
    <property type="term" value="F:aspartate:glutamate, proton antiporter activity"/>
    <property type="evidence" value="ECO:0000250"/>
    <property type="project" value="UniProtKB"/>
</dbReference>
<dbReference type="GO" id="GO:0005509">
    <property type="term" value="F:calcium ion binding"/>
    <property type="evidence" value="ECO:0000266"/>
    <property type="project" value="RGD"/>
</dbReference>
<dbReference type="GO" id="GO:0042802">
    <property type="term" value="F:identical protein binding"/>
    <property type="evidence" value="ECO:0000266"/>
    <property type="project" value="RGD"/>
</dbReference>
<dbReference type="GO" id="GO:0015183">
    <property type="term" value="F:L-aspartate transmembrane transporter activity"/>
    <property type="evidence" value="ECO:0000318"/>
    <property type="project" value="GO_Central"/>
</dbReference>
<dbReference type="GO" id="GO:0005313">
    <property type="term" value="F:L-glutamate transmembrane transporter activity"/>
    <property type="evidence" value="ECO:0000266"/>
    <property type="project" value="RGD"/>
</dbReference>
<dbReference type="GO" id="GO:0015810">
    <property type="term" value="P:aspartate transmembrane transport"/>
    <property type="evidence" value="ECO:0000266"/>
    <property type="project" value="RGD"/>
</dbReference>
<dbReference type="GO" id="GO:0006754">
    <property type="term" value="P:ATP biosynthetic process"/>
    <property type="evidence" value="ECO:0000266"/>
    <property type="project" value="RGD"/>
</dbReference>
<dbReference type="GO" id="GO:0045333">
    <property type="term" value="P:cellular respiration"/>
    <property type="evidence" value="ECO:0000266"/>
    <property type="project" value="RGD"/>
</dbReference>
<dbReference type="GO" id="GO:0006094">
    <property type="term" value="P:gluconeogenesis"/>
    <property type="evidence" value="ECO:0000266"/>
    <property type="project" value="RGD"/>
</dbReference>
<dbReference type="GO" id="GO:0015813">
    <property type="term" value="P:L-glutamate transmembrane transport"/>
    <property type="evidence" value="ECO:0000266"/>
    <property type="project" value="RGD"/>
</dbReference>
<dbReference type="GO" id="GO:0043490">
    <property type="term" value="P:malate-aspartate shuttle"/>
    <property type="evidence" value="ECO:0000266"/>
    <property type="project" value="RGD"/>
</dbReference>
<dbReference type="GO" id="GO:0051592">
    <property type="term" value="P:response to calcium ion"/>
    <property type="evidence" value="ECO:0000266"/>
    <property type="project" value="RGD"/>
</dbReference>
<dbReference type="FunFam" id="1.50.40.10:FF:000004">
    <property type="entry name" value="Calcium-binding mitochondrial carrier protein Aralar1"/>
    <property type="match status" value="1"/>
</dbReference>
<dbReference type="FunFam" id="1.10.238.10:FF:000064">
    <property type="entry name" value="calcium-binding mitochondrial carrier protein Aralar1 isoform X1"/>
    <property type="match status" value="1"/>
</dbReference>
<dbReference type="FunFam" id="1.10.238.10:FF:000529">
    <property type="entry name" value="Solute carrier family 25 member 13"/>
    <property type="match status" value="1"/>
</dbReference>
<dbReference type="Gene3D" id="1.10.238.10">
    <property type="entry name" value="EF-hand"/>
    <property type="match status" value="2"/>
</dbReference>
<dbReference type="Gene3D" id="1.50.40.10">
    <property type="entry name" value="Mitochondrial carrier domain"/>
    <property type="match status" value="1"/>
</dbReference>
<dbReference type="InterPro" id="IPR011992">
    <property type="entry name" value="EF-hand-dom_pair"/>
</dbReference>
<dbReference type="InterPro" id="IPR002048">
    <property type="entry name" value="EF_hand_dom"/>
</dbReference>
<dbReference type="InterPro" id="IPR002067">
    <property type="entry name" value="Mit_carrier"/>
</dbReference>
<dbReference type="InterPro" id="IPR051028">
    <property type="entry name" value="Mito_Solute_Carrier"/>
</dbReference>
<dbReference type="InterPro" id="IPR018108">
    <property type="entry name" value="Mitochondrial_sb/sol_carrier"/>
</dbReference>
<dbReference type="InterPro" id="IPR023395">
    <property type="entry name" value="Mt_carrier_dom_sf"/>
</dbReference>
<dbReference type="PANTHER" id="PTHR45678:SF12">
    <property type="entry name" value="ELECTROGENIC ASPARTATE_GLUTAMATE ANTIPORTER SLC25A13, MITOCHONDRIAL"/>
    <property type="match status" value="1"/>
</dbReference>
<dbReference type="PANTHER" id="PTHR45678">
    <property type="entry name" value="MITOCHONDRIAL 2-OXODICARBOXYLATE CARRIER 1-RELATED"/>
    <property type="match status" value="1"/>
</dbReference>
<dbReference type="Pfam" id="PF00153">
    <property type="entry name" value="Mito_carr"/>
    <property type="match status" value="3"/>
</dbReference>
<dbReference type="PRINTS" id="PR00926">
    <property type="entry name" value="MITOCARRIER"/>
</dbReference>
<dbReference type="SUPFAM" id="SSF47473">
    <property type="entry name" value="EF-hand"/>
    <property type="match status" value="2"/>
</dbReference>
<dbReference type="SUPFAM" id="SSF103506">
    <property type="entry name" value="Mitochondrial carrier"/>
    <property type="match status" value="1"/>
</dbReference>
<dbReference type="PROSITE" id="PS50222">
    <property type="entry name" value="EF_HAND_2"/>
    <property type="match status" value="2"/>
</dbReference>
<dbReference type="PROSITE" id="PS50920">
    <property type="entry name" value="SOLCAR"/>
    <property type="match status" value="3"/>
</dbReference>
<keyword id="KW-0007">Acetylation</keyword>
<keyword id="KW-0106">Calcium</keyword>
<keyword id="KW-0472">Membrane</keyword>
<keyword id="KW-0479">Metal-binding</keyword>
<keyword id="KW-0488">Methylation</keyword>
<keyword id="KW-0496">Mitochondrion</keyword>
<keyword id="KW-0999">Mitochondrion inner membrane</keyword>
<keyword id="KW-0597">Phosphoprotein</keyword>
<keyword id="KW-1185">Reference proteome</keyword>
<keyword id="KW-0677">Repeat</keyword>
<keyword id="KW-0812">Transmembrane</keyword>
<keyword id="KW-1133">Transmembrane helix</keyword>
<keyword id="KW-0813">Transport</keyword>
<sequence>MAAAKVALTKRADPAELKAIFLKYASIEKNGEFFMSPHDFVTRYLNIFGESQPNPKTVELLSGVVDQTKDGLISFQEFVAFESVLCAPDALFMVAFQLFDKAGKGEVTFEDVRQVFGQTTIHQHIPFNWDSEFVQLHFGKERKRHLTYAEFTQFLLEIQLEHAKQAFVQRDNAKTGKVTAIDFRDIMVTIRPHVLTPFVEECLVAAAGGTRSHQVSFSYFNGFNSLLNNMELIRKIYSTLAGSRKDVEVTKEEFALAAQKFGQVTPMEVDILFQLADLYEPRGRMTLADIERIAPLEEGMLPFNLAEAQRQQKASGDAARPFLLQLAESAYRFGLGSIAGAVGATAVYPIDLVKTRMQNQRSTGSFVGELMYKNSFDCFKKVLRYEGFFGLYRGLLPQLLGVAPEKAIKLTVNDFVRDKFMHKDGSVPLLAEIFAGGCAGGSQVIFTNPLEIVKIRLQVAGEITTGPRVSALSVVRDLGFFGIYKGAKACFLRDIPFSAIYFPCYAHVKASFANEDGQVSPGSLLLAGAIAGMPAASLVTPADVIKTRLQVAARAGQTTYSGVTDCFRKILREEGPKALWKGAGARVFRSSPQFGVTLLTYELLQRWFYVDFGGVKPVGSELVPKSRITLPAPNPDHVGGYKLAVATFAGIENKFGLYLPLFKPSASTSKVTAVGS</sequence>
<gene>
    <name evidence="13" type="primary">Slc25a13</name>
</gene>
<evidence type="ECO:0000250" key="1">
    <source>
        <dbReference type="UniProtKB" id="O75746"/>
    </source>
</evidence>
<evidence type="ECO:0000250" key="2">
    <source>
        <dbReference type="UniProtKB" id="Q9QXX4"/>
    </source>
</evidence>
<evidence type="ECO:0000250" key="3">
    <source>
        <dbReference type="UniProtKB" id="Q9UJS0"/>
    </source>
</evidence>
<evidence type="ECO:0000255" key="4"/>
<evidence type="ECO:0000255" key="5">
    <source>
        <dbReference type="PROSITE-ProRule" id="PRU00282"/>
    </source>
</evidence>
<evidence type="ECO:0000255" key="6">
    <source>
        <dbReference type="PROSITE-ProRule" id="PRU00448"/>
    </source>
</evidence>
<evidence type="ECO:0000269" key="7">
    <source>
    </source>
</evidence>
<evidence type="ECO:0000269" key="8">
    <source>
    </source>
</evidence>
<evidence type="ECO:0000305" key="9"/>
<evidence type="ECO:0000305" key="10">
    <source>
    </source>
</evidence>
<evidence type="ECO:0000305" key="11">
    <source>
    </source>
</evidence>
<evidence type="ECO:0000312" key="12">
    <source>
        <dbReference type="Proteomes" id="UP000002494"/>
    </source>
</evidence>
<evidence type="ECO:0000312" key="13">
    <source>
        <dbReference type="RGD" id="1565889"/>
    </source>
</evidence>
<feature type="initiator methionine" description="Removed" evidence="3">
    <location>
        <position position="1"/>
    </location>
</feature>
<feature type="chain" id="PRO_0000455804" description="Electrogenic aspartate/glutamate antiporter SLC25A13, mitochondrial" evidence="3">
    <location>
        <begin position="2"/>
        <end position="676"/>
    </location>
</feature>
<feature type="topological domain" description="Mitochondrial intermembrane" evidence="9">
    <location>
        <begin position="2"/>
        <end position="332"/>
    </location>
</feature>
<feature type="transmembrane region" description="Helical; Name=1" evidence="1">
    <location>
        <begin position="333"/>
        <end position="350"/>
    </location>
</feature>
<feature type="topological domain" description="Mitochondrial matrix" evidence="9">
    <location>
        <begin position="351"/>
        <end position="393"/>
    </location>
</feature>
<feature type="transmembrane region" description="Helical; Name=2" evidence="1">
    <location>
        <begin position="394"/>
        <end position="413"/>
    </location>
</feature>
<feature type="topological domain" description="Mitochondrial intermembrane" evidence="9">
    <location>
        <begin position="414"/>
        <end position="436"/>
    </location>
</feature>
<feature type="transmembrane region" description="Helical; Name=3" evidence="1">
    <location>
        <begin position="437"/>
        <end position="450"/>
    </location>
</feature>
<feature type="topological domain" description="Mitochondrial matrix" evidence="9">
    <location>
        <begin position="451"/>
        <end position="485"/>
    </location>
</feature>
<feature type="transmembrane region" description="Helical; Name=4" evidence="1">
    <location>
        <begin position="486"/>
        <end position="505"/>
    </location>
</feature>
<feature type="topological domain" description="Mitochondrial intermembrane" evidence="9">
    <location>
        <begin position="506"/>
        <end position="524"/>
    </location>
</feature>
<feature type="transmembrane region" description="Helical; Name=5" evidence="1">
    <location>
        <begin position="525"/>
        <end position="542"/>
    </location>
</feature>
<feature type="topological domain" description="Mitochondrial matrix" evidence="9">
    <location>
        <begin position="543"/>
        <end position="581"/>
    </location>
</feature>
<feature type="transmembrane region" description="Helical; Name=6" evidence="1">
    <location>
        <begin position="582"/>
        <end position="601"/>
    </location>
</feature>
<feature type="topological domain" description="Mitochondrial intermembrane" evidence="9">
    <location>
        <begin position="602"/>
        <end position="676"/>
    </location>
</feature>
<feature type="domain" description="EF-hand 1" evidence="9">
    <location>
        <begin position="51"/>
        <end position="86"/>
    </location>
</feature>
<feature type="domain" description="EF-hand 2" evidence="6">
    <location>
        <begin position="87"/>
        <end position="122"/>
    </location>
</feature>
<feature type="domain" description="EF-hand 3" evidence="9">
    <location>
        <begin position="125"/>
        <end position="157"/>
    </location>
</feature>
<feature type="domain" description="EF-hand 4" evidence="6">
    <location>
        <begin position="158"/>
        <end position="193"/>
    </location>
</feature>
<feature type="repeat" description="Solcar 1" evidence="5">
    <location>
        <begin position="327"/>
        <end position="419"/>
    </location>
</feature>
<feature type="repeat" description="Solcar 2" evidence="5">
    <location>
        <begin position="427"/>
        <end position="511"/>
    </location>
</feature>
<feature type="repeat" description="Solcar 3" evidence="5">
    <location>
        <begin position="519"/>
        <end position="607"/>
    </location>
</feature>
<feature type="region of interest" description="Regulatory N-terminal domain" evidence="3">
    <location>
        <begin position="2"/>
        <end position="295"/>
    </location>
</feature>
<feature type="region of interest" description="Linker loop domain" evidence="1">
    <location>
        <begin position="296"/>
        <end position="312"/>
    </location>
</feature>
<feature type="region of interest" description="Carrier domain" evidence="3">
    <location>
        <begin position="322"/>
        <end position="613"/>
    </location>
</feature>
<feature type="region of interest" description="C-terminal domain" evidence="3">
    <location>
        <begin position="614"/>
        <end position="676"/>
    </location>
</feature>
<feature type="binding site" evidence="3">
    <location>
        <position position="66"/>
    </location>
    <ligand>
        <name>Ca(2+)</name>
        <dbReference type="ChEBI" id="CHEBI:29108"/>
    </ligand>
</feature>
<feature type="binding site" evidence="3">
    <location>
        <position position="68"/>
    </location>
    <ligand>
        <name>Ca(2+)</name>
        <dbReference type="ChEBI" id="CHEBI:29108"/>
    </ligand>
</feature>
<feature type="binding site" evidence="3">
    <location>
        <position position="70"/>
    </location>
    <ligand>
        <name>Ca(2+)</name>
        <dbReference type="ChEBI" id="CHEBI:29108"/>
    </ligand>
</feature>
<feature type="binding site" evidence="3">
    <location>
        <position position="72"/>
    </location>
    <ligand>
        <name>Ca(2+)</name>
        <dbReference type="ChEBI" id="CHEBI:29108"/>
    </ligand>
</feature>
<feature type="binding site" evidence="3">
    <location>
        <position position="77"/>
    </location>
    <ligand>
        <name>Ca(2+)</name>
        <dbReference type="ChEBI" id="CHEBI:29108"/>
    </ligand>
</feature>
<feature type="modified residue" description="N-acetylalanine" evidence="3">
    <location>
        <position position="2"/>
    </location>
</feature>
<feature type="modified residue" description="N6-acetyllysine" evidence="2">
    <location>
        <position position="354"/>
    </location>
</feature>
<feature type="modified residue" description="N6-acetyllysine" evidence="2">
    <location>
        <position position="373"/>
    </location>
</feature>
<feature type="modified residue" description="N6-methyllysine" evidence="3">
    <location>
        <position position="454"/>
    </location>
</feature>
<feature type="modified residue" description="N6-acetyllysine; alternate" evidence="2">
    <location>
        <position position="485"/>
    </location>
</feature>
<feature type="modified residue" description="N6-succinyllysine; alternate" evidence="2">
    <location>
        <position position="485"/>
    </location>
</feature>
<feature type="modified residue" description="N6-succinyllysine" evidence="2">
    <location>
        <position position="581"/>
    </location>
</feature>
<feature type="modified residue" description="N6-acetyllysine" evidence="2">
    <location>
        <position position="663"/>
    </location>
</feature>
<feature type="modified residue" description="Phosphoserine" evidence="3">
    <location>
        <position position="667"/>
    </location>
</feature>
<name>S2513_RAT</name>
<proteinExistence type="inferred from homology"/>
<protein>
    <recommendedName>
        <fullName evidence="10 11">Electrogenic aspartate/glutamate antiporter SLC25A13, mitochondrial</fullName>
    </recommendedName>
    <alternativeName>
        <fullName evidence="13">Solute carrier family 25 member 13</fullName>
    </alternativeName>
</protein>
<comment type="function">
    <text evidence="3 7 8">Mitochondrial electrogenic aspartate/glutamate antiporter that favors efflux of aspartate and entry of glutamate and proton within the mitochondria as part of the malate-aspartate shuttle (PubMed:4436323). Also mediates the uptake of L-cysteinesulfinate (3-sulfino-L-alanine) by mitochondria in exchange of L-glutamate and proton. Can also exchange L-cysteinesulfinate with aspartate in their anionic form without any proton translocation (PubMed:486467). Lacks transport activity towards gamma-aminobutyric acid (GABA) (By similarity).</text>
</comment>
<comment type="catalytic activity">
    <reaction evidence="7">
        <text>L-aspartate(in) + L-glutamate(out) + H(+)(out) = L-aspartate(out) + L-glutamate(in) + H(+)(in)</text>
        <dbReference type="Rhea" id="RHEA:70783"/>
        <dbReference type="ChEBI" id="CHEBI:15378"/>
        <dbReference type="ChEBI" id="CHEBI:29985"/>
        <dbReference type="ChEBI" id="CHEBI:29991"/>
    </reaction>
</comment>
<comment type="catalytic activity">
    <reaction evidence="8">
        <text>3-sulfino-L-alanine(out) + L-glutamate(in) + H(+)(in) = 3-sulfino-L-alanine(in) + L-glutamate(out) + H(+)(out)</text>
        <dbReference type="Rhea" id="RHEA:70967"/>
        <dbReference type="ChEBI" id="CHEBI:15378"/>
        <dbReference type="ChEBI" id="CHEBI:29985"/>
        <dbReference type="ChEBI" id="CHEBI:61085"/>
    </reaction>
</comment>
<comment type="catalytic activity">
    <reaction evidence="8">
        <text>3-sulfino-L-alanine(out) + L-aspartate(in) = 3-sulfino-L-alanine(in) + L-aspartate(out)</text>
        <dbReference type="Rhea" id="RHEA:70975"/>
        <dbReference type="ChEBI" id="CHEBI:29991"/>
        <dbReference type="ChEBI" id="CHEBI:61085"/>
    </reaction>
</comment>
<comment type="activity regulation">
    <text evidence="8">L-aspartate and 3-sulfino-L-alanine uptake are both inhibited by glisoxepide.</text>
</comment>
<comment type="subunit">
    <text evidence="3">Homodimer (via N-terminus).</text>
</comment>
<comment type="subcellular location">
    <subcellularLocation>
        <location evidence="10 11">Mitochondrion inner membrane</location>
        <topology evidence="4">Multi-pass membrane protein</topology>
    </subcellularLocation>
</comment>
<comment type="domain">
    <text evidence="1 3">The EF-hand 2 domain within the regulatory N-terminal domain binds one calcium in the mitochondrial intermembrane space. Calcium triggers the binding of the regulatory N-terminal domain to the C-terminal domain, opening a vestibule which allows the substrates to be translocated through the carrier domain (By similarity). In the absence of calcium, the linker loop domain may close the vestibule and prevent substrates from entering the carrier domain (By similarity).</text>
</comment>
<comment type="similarity">
    <text evidence="9">Belongs to the mitochondrial carrier (TC 2.A.29) family.</text>
</comment>
<reference key="1">
    <citation type="journal article" date="2004" name="Nature">
        <title>Genome sequence of the Brown Norway rat yields insights into mammalian evolution.</title>
        <authorList>
            <person name="Gibbs R.A."/>
            <person name="Weinstock G.M."/>
            <person name="Metzker M.L."/>
            <person name="Muzny D.M."/>
            <person name="Sodergren E.J."/>
            <person name="Scherer S."/>
            <person name="Scott G."/>
            <person name="Steffen D."/>
            <person name="Worley K.C."/>
            <person name="Burch P.E."/>
            <person name="Okwuonu G."/>
            <person name="Hines S."/>
            <person name="Lewis L."/>
            <person name="Deramo C."/>
            <person name="Delgado O."/>
            <person name="Dugan-Rocha S."/>
            <person name="Miner G."/>
            <person name="Morgan M."/>
            <person name="Hawes A."/>
            <person name="Gill R."/>
            <person name="Holt R.A."/>
            <person name="Adams M.D."/>
            <person name="Amanatides P.G."/>
            <person name="Baden-Tillson H."/>
            <person name="Barnstead M."/>
            <person name="Chin S."/>
            <person name="Evans C.A."/>
            <person name="Ferriera S."/>
            <person name="Fosler C."/>
            <person name="Glodek A."/>
            <person name="Gu Z."/>
            <person name="Jennings D."/>
            <person name="Kraft C.L."/>
            <person name="Nguyen T."/>
            <person name="Pfannkoch C.M."/>
            <person name="Sitter C."/>
            <person name="Sutton G.G."/>
            <person name="Venter J.C."/>
            <person name="Woodage T."/>
            <person name="Smith D."/>
            <person name="Lee H.-M."/>
            <person name="Gustafson E."/>
            <person name="Cahill P."/>
            <person name="Kana A."/>
            <person name="Doucette-Stamm L."/>
            <person name="Weinstock K."/>
            <person name="Fechtel K."/>
            <person name="Weiss R.B."/>
            <person name="Dunn D.M."/>
            <person name="Green E.D."/>
            <person name="Blakesley R.W."/>
            <person name="Bouffard G.G."/>
            <person name="De Jong P.J."/>
            <person name="Osoegawa K."/>
            <person name="Zhu B."/>
            <person name="Marra M."/>
            <person name="Schein J."/>
            <person name="Bosdet I."/>
            <person name="Fjell C."/>
            <person name="Jones S."/>
            <person name="Krzywinski M."/>
            <person name="Mathewson C."/>
            <person name="Siddiqui A."/>
            <person name="Wye N."/>
            <person name="McPherson J."/>
            <person name="Zhao S."/>
            <person name="Fraser C.M."/>
            <person name="Shetty J."/>
            <person name="Shatsman S."/>
            <person name="Geer K."/>
            <person name="Chen Y."/>
            <person name="Abramzon S."/>
            <person name="Nierman W.C."/>
            <person name="Havlak P.H."/>
            <person name="Chen R."/>
            <person name="Durbin K.J."/>
            <person name="Egan A."/>
            <person name="Ren Y."/>
            <person name="Song X.-Z."/>
            <person name="Li B."/>
            <person name="Liu Y."/>
            <person name="Qin X."/>
            <person name="Cawley S."/>
            <person name="Cooney A.J."/>
            <person name="D'Souza L.M."/>
            <person name="Martin K."/>
            <person name="Wu J.Q."/>
            <person name="Gonzalez-Garay M.L."/>
            <person name="Jackson A.R."/>
            <person name="Kalafus K.J."/>
            <person name="McLeod M.P."/>
            <person name="Milosavljevic A."/>
            <person name="Virk D."/>
            <person name="Volkov A."/>
            <person name="Wheeler D.A."/>
            <person name="Zhang Z."/>
            <person name="Bailey J.A."/>
            <person name="Eichler E.E."/>
            <person name="Tuzun E."/>
            <person name="Birney E."/>
            <person name="Mongin E."/>
            <person name="Ureta-Vidal A."/>
            <person name="Woodwark C."/>
            <person name="Zdobnov E."/>
            <person name="Bork P."/>
            <person name="Suyama M."/>
            <person name="Torrents D."/>
            <person name="Alexandersson M."/>
            <person name="Trask B.J."/>
            <person name="Young J.M."/>
            <person name="Huang H."/>
            <person name="Wang H."/>
            <person name="Xing H."/>
            <person name="Daniels S."/>
            <person name="Gietzen D."/>
            <person name="Schmidt J."/>
            <person name="Stevens K."/>
            <person name="Vitt U."/>
            <person name="Wingrove J."/>
            <person name="Camara F."/>
            <person name="Mar Alba M."/>
            <person name="Abril J.F."/>
            <person name="Guigo R."/>
            <person name="Smit A."/>
            <person name="Dubchak I."/>
            <person name="Rubin E.M."/>
            <person name="Couronne O."/>
            <person name="Poliakov A."/>
            <person name="Huebner N."/>
            <person name="Ganten D."/>
            <person name="Goesele C."/>
            <person name="Hummel O."/>
            <person name="Kreitler T."/>
            <person name="Lee Y.-A."/>
            <person name="Monti J."/>
            <person name="Schulz H."/>
            <person name="Zimdahl H."/>
            <person name="Himmelbauer H."/>
            <person name="Lehrach H."/>
            <person name="Jacob H.J."/>
            <person name="Bromberg S."/>
            <person name="Gullings-Handley J."/>
            <person name="Jensen-Seaman M.I."/>
            <person name="Kwitek A.E."/>
            <person name="Lazar J."/>
            <person name="Pasko D."/>
            <person name="Tonellato P.J."/>
            <person name="Twigger S."/>
            <person name="Ponting C.P."/>
            <person name="Duarte J.M."/>
            <person name="Rice S."/>
            <person name="Goodstadt L."/>
            <person name="Beatson S.A."/>
            <person name="Emes R.D."/>
            <person name="Winter E.E."/>
            <person name="Webber C."/>
            <person name="Brandt P."/>
            <person name="Nyakatura G."/>
            <person name="Adetobi M."/>
            <person name="Chiaromonte F."/>
            <person name="Elnitski L."/>
            <person name="Eswara P."/>
            <person name="Hardison R.C."/>
            <person name="Hou M."/>
            <person name="Kolbe D."/>
            <person name="Makova K."/>
            <person name="Miller W."/>
            <person name="Nekrutenko A."/>
            <person name="Riemer C."/>
            <person name="Schwartz S."/>
            <person name="Taylor J."/>
            <person name="Yang S."/>
            <person name="Zhang Y."/>
            <person name="Lindpaintner K."/>
            <person name="Andrews T.D."/>
            <person name="Caccamo M."/>
            <person name="Clamp M."/>
            <person name="Clarke L."/>
            <person name="Curwen V."/>
            <person name="Durbin R.M."/>
            <person name="Eyras E."/>
            <person name="Searle S.M."/>
            <person name="Cooper G.M."/>
            <person name="Batzoglou S."/>
            <person name="Brudno M."/>
            <person name="Sidow A."/>
            <person name="Stone E.A."/>
            <person name="Payseur B.A."/>
            <person name="Bourque G."/>
            <person name="Lopez-Otin C."/>
            <person name="Puente X.S."/>
            <person name="Chakrabarti K."/>
            <person name="Chatterji S."/>
            <person name="Dewey C."/>
            <person name="Pachter L."/>
            <person name="Bray N."/>
            <person name="Yap V.B."/>
            <person name="Caspi A."/>
            <person name="Tesler G."/>
            <person name="Pevzner P.A."/>
            <person name="Haussler D."/>
            <person name="Roskin K.M."/>
            <person name="Baertsch R."/>
            <person name="Clawson H."/>
            <person name="Furey T.S."/>
            <person name="Hinrichs A.S."/>
            <person name="Karolchik D."/>
            <person name="Kent W.J."/>
            <person name="Rosenbloom K.R."/>
            <person name="Trumbower H."/>
            <person name="Weirauch M."/>
            <person name="Cooper D.N."/>
            <person name="Stenson P.D."/>
            <person name="Ma B."/>
            <person name="Brent M."/>
            <person name="Arumugam M."/>
            <person name="Shteynberg D."/>
            <person name="Copley R.R."/>
            <person name="Taylor M.S."/>
            <person name="Riethman H."/>
            <person name="Mudunuri U."/>
            <person name="Peterson J."/>
            <person name="Guyer M."/>
            <person name="Felsenfeld A."/>
            <person name="Old S."/>
            <person name="Mockrin S."/>
            <person name="Collins F.S."/>
        </authorList>
    </citation>
    <scope>NUCLEOTIDE SEQUENCE [LARGE SCALE GENOMIC DNA]</scope>
    <source>
        <strain>Brown Norway</strain>
    </source>
</reference>
<reference key="2">
    <citation type="journal article" date="1974" name="J. Biol. Chem.">
        <title>Electrogenic characteristics of the mitochondrial glutamate-aspartate antiporter.</title>
        <authorList>
            <person name="LaNoue K.F."/>
            <person name="Tischler M.E."/>
        </authorList>
    </citation>
    <scope>FUNCTION</scope>
    <scope>TRANSPORTER ACTIVITY</scope>
    <scope>SUBCELLULAR LOCATION</scope>
</reference>
<reference key="3">
    <citation type="journal article" date="1979" name="Biochim. Biophys. Acta">
        <title>The transport of L-cysteinesulfinate in rat liver mitochondria.</title>
        <authorList>
            <person name="Palmieri F."/>
            <person name="Stipani I."/>
            <person name="Iacobazzi V."/>
        </authorList>
    </citation>
    <scope>FUNCTION</scope>
    <scope>TRANSPORTER ACTIVITY</scope>
    <scope>ACTIVITY REGULATION</scope>
    <scope>SUBCELLULAR LOCATION</scope>
</reference>
<organism evidence="12">
    <name type="scientific">Rattus norvegicus</name>
    <name type="common">Rat</name>
    <dbReference type="NCBI Taxonomy" id="10116"/>
    <lineage>
        <taxon>Eukaryota</taxon>
        <taxon>Metazoa</taxon>
        <taxon>Chordata</taxon>
        <taxon>Craniata</taxon>
        <taxon>Vertebrata</taxon>
        <taxon>Euteleostomi</taxon>
        <taxon>Mammalia</taxon>
        <taxon>Eutheria</taxon>
        <taxon>Euarchontoglires</taxon>
        <taxon>Glires</taxon>
        <taxon>Rodentia</taxon>
        <taxon>Myomorpha</taxon>
        <taxon>Muroidea</taxon>
        <taxon>Muridae</taxon>
        <taxon>Murinae</taxon>
        <taxon>Rattus</taxon>
    </lineage>
</organism>
<accession>F1LZW6</accession>